<keyword id="KW-0963">Cytoplasm</keyword>
<keyword id="KW-0378">Hydrolase</keyword>
<keyword id="KW-0694">RNA-binding</keyword>
<keyword id="KW-0820">tRNA-binding</keyword>
<evidence type="ECO:0000255" key="1">
    <source>
        <dbReference type="HAMAP-Rule" id="MF_00518"/>
    </source>
</evidence>
<comment type="function">
    <text evidence="1">An aminoacyl-tRNA editing enzyme that deacylates mischarged D-aminoacyl-tRNAs. Also deacylates mischarged glycyl-tRNA(Ala), protecting cells against glycine mischarging by AlaRS. Acts via tRNA-based rather than protein-based catalysis; rejects L-amino acids rather than detecting D-amino acids in the active site. By recycling D-aminoacyl-tRNA to D-amino acids and free tRNA molecules, this enzyme counteracts the toxicity associated with the formation of D-aminoacyl-tRNA entities in vivo and helps enforce protein L-homochirality.</text>
</comment>
<comment type="catalytic activity">
    <reaction evidence="1">
        <text>glycyl-tRNA(Ala) + H2O = tRNA(Ala) + glycine + H(+)</text>
        <dbReference type="Rhea" id="RHEA:53744"/>
        <dbReference type="Rhea" id="RHEA-COMP:9657"/>
        <dbReference type="Rhea" id="RHEA-COMP:13640"/>
        <dbReference type="ChEBI" id="CHEBI:15377"/>
        <dbReference type="ChEBI" id="CHEBI:15378"/>
        <dbReference type="ChEBI" id="CHEBI:57305"/>
        <dbReference type="ChEBI" id="CHEBI:78442"/>
        <dbReference type="ChEBI" id="CHEBI:78522"/>
        <dbReference type="EC" id="3.1.1.96"/>
    </reaction>
</comment>
<comment type="catalytic activity">
    <reaction evidence="1">
        <text>a D-aminoacyl-tRNA + H2O = a tRNA + a D-alpha-amino acid + H(+)</text>
        <dbReference type="Rhea" id="RHEA:13953"/>
        <dbReference type="Rhea" id="RHEA-COMP:10123"/>
        <dbReference type="Rhea" id="RHEA-COMP:10124"/>
        <dbReference type="ChEBI" id="CHEBI:15377"/>
        <dbReference type="ChEBI" id="CHEBI:15378"/>
        <dbReference type="ChEBI" id="CHEBI:59871"/>
        <dbReference type="ChEBI" id="CHEBI:78442"/>
        <dbReference type="ChEBI" id="CHEBI:79333"/>
        <dbReference type="EC" id="3.1.1.96"/>
    </reaction>
</comment>
<comment type="subunit">
    <text evidence="1">Homodimer.</text>
</comment>
<comment type="subcellular location">
    <subcellularLocation>
        <location evidence="1">Cytoplasm</location>
    </subcellularLocation>
</comment>
<comment type="domain">
    <text evidence="1">A Gly-cisPro motif from one monomer fits into the active site of the other monomer to allow specific chiral rejection of L-amino acids.</text>
</comment>
<comment type="similarity">
    <text evidence="1">Belongs to the DTD family.</text>
</comment>
<gene>
    <name evidence="1" type="primary">dtd</name>
    <name type="ordered locus">SPN23F16450</name>
</gene>
<name>DTD_STRPJ</name>
<dbReference type="EC" id="3.1.1.96" evidence="1"/>
<dbReference type="EMBL" id="FM211187">
    <property type="protein sequence ID" value="CAR69419.1"/>
    <property type="molecule type" value="Genomic_DNA"/>
</dbReference>
<dbReference type="RefSeq" id="WP_000691400.1">
    <property type="nucleotide sequence ID" value="NC_011900.1"/>
</dbReference>
<dbReference type="SMR" id="B8ZM41"/>
<dbReference type="GeneID" id="45653142"/>
<dbReference type="KEGG" id="sne:SPN23F16450"/>
<dbReference type="HOGENOM" id="CLU_076901_1_0_9"/>
<dbReference type="GO" id="GO:0005737">
    <property type="term" value="C:cytoplasm"/>
    <property type="evidence" value="ECO:0007669"/>
    <property type="project" value="UniProtKB-SubCell"/>
</dbReference>
<dbReference type="GO" id="GO:0051500">
    <property type="term" value="F:D-tyrosyl-tRNA(Tyr) deacylase activity"/>
    <property type="evidence" value="ECO:0007669"/>
    <property type="project" value="TreeGrafter"/>
</dbReference>
<dbReference type="GO" id="GO:0106026">
    <property type="term" value="F:Gly-tRNA(Ala) deacylase activity"/>
    <property type="evidence" value="ECO:0007669"/>
    <property type="project" value="UniProtKB-UniRule"/>
</dbReference>
<dbReference type="GO" id="GO:0043908">
    <property type="term" value="F:Ser(Gly)-tRNA(Ala) hydrolase activity"/>
    <property type="evidence" value="ECO:0007669"/>
    <property type="project" value="UniProtKB-UniRule"/>
</dbReference>
<dbReference type="GO" id="GO:0000049">
    <property type="term" value="F:tRNA binding"/>
    <property type="evidence" value="ECO:0007669"/>
    <property type="project" value="UniProtKB-UniRule"/>
</dbReference>
<dbReference type="GO" id="GO:0019478">
    <property type="term" value="P:D-amino acid catabolic process"/>
    <property type="evidence" value="ECO:0007669"/>
    <property type="project" value="UniProtKB-UniRule"/>
</dbReference>
<dbReference type="CDD" id="cd00563">
    <property type="entry name" value="Dtyr_deacylase"/>
    <property type="match status" value="1"/>
</dbReference>
<dbReference type="FunFam" id="3.50.80.10:FF:000001">
    <property type="entry name" value="D-aminoacyl-tRNA deacylase"/>
    <property type="match status" value="1"/>
</dbReference>
<dbReference type="Gene3D" id="3.50.80.10">
    <property type="entry name" value="D-tyrosyl-tRNA(Tyr) deacylase"/>
    <property type="match status" value="1"/>
</dbReference>
<dbReference type="HAMAP" id="MF_00518">
    <property type="entry name" value="Deacylase_Dtd"/>
    <property type="match status" value="1"/>
</dbReference>
<dbReference type="InterPro" id="IPR003732">
    <property type="entry name" value="Daa-tRNA_deacyls_DTD"/>
</dbReference>
<dbReference type="InterPro" id="IPR023509">
    <property type="entry name" value="DTD-like_sf"/>
</dbReference>
<dbReference type="NCBIfam" id="TIGR00256">
    <property type="entry name" value="D-aminoacyl-tRNA deacylase"/>
    <property type="match status" value="1"/>
</dbReference>
<dbReference type="PANTHER" id="PTHR10472:SF5">
    <property type="entry name" value="D-AMINOACYL-TRNA DEACYLASE 1"/>
    <property type="match status" value="1"/>
</dbReference>
<dbReference type="PANTHER" id="PTHR10472">
    <property type="entry name" value="D-TYROSYL-TRNA TYR DEACYLASE"/>
    <property type="match status" value="1"/>
</dbReference>
<dbReference type="Pfam" id="PF02580">
    <property type="entry name" value="Tyr_Deacylase"/>
    <property type="match status" value="1"/>
</dbReference>
<dbReference type="SUPFAM" id="SSF69500">
    <property type="entry name" value="DTD-like"/>
    <property type="match status" value="1"/>
</dbReference>
<accession>B8ZM41</accession>
<organism>
    <name type="scientific">Streptococcus pneumoniae (strain ATCC 700669 / Spain 23F-1)</name>
    <dbReference type="NCBI Taxonomy" id="561276"/>
    <lineage>
        <taxon>Bacteria</taxon>
        <taxon>Bacillati</taxon>
        <taxon>Bacillota</taxon>
        <taxon>Bacilli</taxon>
        <taxon>Lactobacillales</taxon>
        <taxon>Streptococcaceae</taxon>
        <taxon>Streptococcus</taxon>
    </lineage>
</organism>
<reference key="1">
    <citation type="journal article" date="2009" name="J. Bacteriol.">
        <title>Role of conjugative elements in the evolution of the multidrug-resistant pandemic clone Streptococcus pneumoniae Spain23F ST81.</title>
        <authorList>
            <person name="Croucher N.J."/>
            <person name="Walker D."/>
            <person name="Romero P."/>
            <person name="Lennard N."/>
            <person name="Paterson G.K."/>
            <person name="Bason N.C."/>
            <person name="Mitchell A.M."/>
            <person name="Quail M.A."/>
            <person name="Andrew P.W."/>
            <person name="Parkhill J."/>
            <person name="Bentley S.D."/>
            <person name="Mitchell T.J."/>
        </authorList>
    </citation>
    <scope>NUCLEOTIDE SEQUENCE [LARGE SCALE GENOMIC DNA]</scope>
    <source>
        <strain>ATCC 700669 / Spain 23F-1</strain>
    </source>
</reference>
<protein>
    <recommendedName>
        <fullName evidence="1">D-aminoacyl-tRNA deacylase</fullName>
        <shortName evidence="1">DTD</shortName>
        <ecNumber evidence="1">3.1.1.96</ecNumber>
    </recommendedName>
    <alternativeName>
        <fullName evidence="1">Gly-tRNA(Ala) deacylase</fullName>
    </alternativeName>
</protein>
<proteinExistence type="inferred from homology"/>
<sequence>MKIIIQRVKKAQVSIEGQIQGKINQGLLLLVGVGPEDQEEDLDYAVRKLVNMRIFSDAEGKMNLSVKDIEGEILSISQFTLFADTKKGNRPAFTGAAKPDMASDFYDAFNQKLAQEVPVQTGIFGADMQVELVNNGPVTIILDTKKR</sequence>
<feature type="chain" id="PRO_1000146214" description="D-aminoacyl-tRNA deacylase">
    <location>
        <begin position="1"/>
        <end position="147"/>
    </location>
</feature>
<feature type="short sequence motif" description="Gly-cisPro motif, important for rejection of L-amino acids" evidence="1">
    <location>
        <begin position="136"/>
        <end position="137"/>
    </location>
</feature>